<gene>
    <name type="primary">ctrD</name>
    <name type="ordered locus">NMB0074</name>
</gene>
<comment type="function">
    <text>Putative ATP-binding protein, and an energy-coupling component of capsule polysaccharide export apparatus.</text>
</comment>
<comment type="catalytic activity">
    <reaction>
        <text>ATP + H2O + capsular polysaccharide-[capsular polysaccharide-binding protein]Side 1 = ADP + phosphate + capsular polysaccharideSide 2 + [capsular polysaccharide-binding protein]Side 1.</text>
        <dbReference type="EC" id="7.6.2.12"/>
    </reaction>
</comment>
<comment type="subcellular location">
    <subcellularLocation>
        <location evidence="2">Cell inner membrane</location>
        <topology evidence="2">Peripheral membrane protein</topology>
    </subcellularLocation>
</comment>
<comment type="similarity">
    <text evidence="2">Belongs to the ABC transporter superfamily.</text>
</comment>
<keyword id="KW-0067">ATP-binding</keyword>
<keyword id="KW-0972">Capsule biogenesis/degradation</keyword>
<keyword id="KW-0997">Cell inner membrane</keyword>
<keyword id="KW-1003">Cell membrane</keyword>
<keyword id="KW-0472">Membrane</keyword>
<keyword id="KW-0547">Nucleotide-binding</keyword>
<keyword id="KW-0625">Polysaccharide transport</keyword>
<keyword id="KW-1185">Reference proteome</keyword>
<keyword id="KW-0762">Sugar transport</keyword>
<keyword id="KW-1278">Translocase</keyword>
<keyword id="KW-0813">Transport</keyword>
<proteinExistence type="inferred from homology"/>
<accession>P32016</accession>
<organism>
    <name type="scientific">Neisseria meningitidis serogroup B (strain ATCC BAA-335 / MC58)</name>
    <dbReference type="NCBI Taxonomy" id="122586"/>
    <lineage>
        <taxon>Bacteria</taxon>
        <taxon>Pseudomonadati</taxon>
        <taxon>Pseudomonadota</taxon>
        <taxon>Betaproteobacteria</taxon>
        <taxon>Neisseriales</taxon>
        <taxon>Neisseriaceae</taxon>
        <taxon>Neisseria</taxon>
    </lineage>
</organism>
<evidence type="ECO:0000255" key="1">
    <source>
        <dbReference type="PROSITE-ProRule" id="PRU00434"/>
    </source>
</evidence>
<evidence type="ECO:0000305" key="2"/>
<dbReference type="EC" id="7.6.2.12"/>
<dbReference type="EMBL" id="M57677">
    <property type="protein sequence ID" value="AAA25453.1"/>
    <property type="molecule type" value="Genomic_DNA"/>
</dbReference>
<dbReference type="EMBL" id="AE002098">
    <property type="protein sequence ID" value="AAF40541.1"/>
    <property type="molecule type" value="Genomic_DNA"/>
</dbReference>
<dbReference type="PIR" id="H81241">
    <property type="entry name" value="H81241"/>
</dbReference>
<dbReference type="PIR" id="S15223">
    <property type="entry name" value="S15223"/>
</dbReference>
<dbReference type="RefSeq" id="NP_273138.1">
    <property type="nucleotide sequence ID" value="NC_003112.2"/>
</dbReference>
<dbReference type="RefSeq" id="WP_002224750.1">
    <property type="nucleotide sequence ID" value="NC_003112.2"/>
</dbReference>
<dbReference type="SMR" id="P32016"/>
<dbReference type="STRING" id="122586.NMB0074"/>
<dbReference type="PaxDb" id="122586-NMB0074"/>
<dbReference type="KEGG" id="nme:NMB0074"/>
<dbReference type="PATRIC" id="fig|122586.8.peg.108"/>
<dbReference type="HOGENOM" id="CLU_000604_1_2_4"/>
<dbReference type="InParanoid" id="P32016"/>
<dbReference type="OrthoDB" id="9778870at2"/>
<dbReference type="Proteomes" id="UP000000425">
    <property type="component" value="Chromosome"/>
</dbReference>
<dbReference type="GO" id="GO:0005886">
    <property type="term" value="C:plasma membrane"/>
    <property type="evidence" value="ECO:0007669"/>
    <property type="project" value="UniProtKB-SubCell"/>
</dbReference>
<dbReference type="GO" id="GO:0015436">
    <property type="term" value="F:ABC-type capsular-polysaccharide transporter activity"/>
    <property type="evidence" value="ECO:0007669"/>
    <property type="project" value="UniProtKB-EC"/>
</dbReference>
<dbReference type="GO" id="GO:0005524">
    <property type="term" value="F:ATP binding"/>
    <property type="evidence" value="ECO:0007669"/>
    <property type="project" value="UniProtKB-KW"/>
</dbReference>
<dbReference type="GO" id="GO:0016887">
    <property type="term" value="F:ATP hydrolysis activity"/>
    <property type="evidence" value="ECO:0007669"/>
    <property type="project" value="InterPro"/>
</dbReference>
<dbReference type="CDD" id="cd03220">
    <property type="entry name" value="ABC_KpsT_Wzt"/>
    <property type="match status" value="1"/>
</dbReference>
<dbReference type="Gene3D" id="3.40.50.300">
    <property type="entry name" value="P-loop containing nucleotide triphosphate hydrolases"/>
    <property type="match status" value="1"/>
</dbReference>
<dbReference type="InterPro" id="IPR003593">
    <property type="entry name" value="AAA+_ATPase"/>
</dbReference>
<dbReference type="InterPro" id="IPR003439">
    <property type="entry name" value="ABC_transporter-like_ATP-bd"/>
</dbReference>
<dbReference type="InterPro" id="IPR017871">
    <property type="entry name" value="ABC_transporter-like_CS"/>
</dbReference>
<dbReference type="InterPro" id="IPR015860">
    <property type="entry name" value="ABC_transpr_TagH-like"/>
</dbReference>
<dbReference type="InterPro" id="IPR050683">
    <property type="entry name" value="Bact_Polysacc_Export_ATP-bd"/>
</dbReference>
<dbReference type="InterPro" id="IPR027417">
    <property type="entry name" value="P-loop_NTPase"/>
</dbReference>
<dbReference type="PANTHER" id="PTHR46743">
    <property type="entry name" value="TEICHOIC ACIDS EXPORT ATP-BINDING PROTEIN TAGH"/>
    <property type="match status" value="1"/>
</dbReference>
<dbReference type="PANTHER" id="PTHR46743:SF2">
    <property type="entry name" value="TEICHOIC ACIDS EXPORT ATP-BINDING PROTEIN TAGH"/>
    <property type="match status" value="1"/>
</dbReference>
<dbReference type="Pfam" id="PF00005">
    <property type="entry name" value="ABC_tran"/>
    <property type="match status" value="1"/>
</dbReference>
<dbReference type="SMART" id="SM00382">
    <property type="entry name" value="AAA"/>
    <property type="match status" value="1"/>
</dbReference>
<dbReference type="SUPFAM" id="SSF52540">
    <property type="entry name" value="P-loop containing nucleoside triphosphate hydrolases"/>
    <property type="match status" value="1"/>
</dbReference>
<dbReference type="PROSITE" id="PS00211">
    <property type="entry name" value="ABC_TRANSPORTER_1"/>
    <property type="match status" value="1"/>
</dbReference>
<dbReference type="PROSITE" id="PS50893">
    <property type="entry name" value="ABC_TRANSPORTER_2"/>
    <property type="match status" value="1"/>
</dbReference>
<protein>
    <recommendedName>
        <fullName>Capsule polysaccharide export ATP-binding protein CtrD</fullName>
        <ecNumber>7.6.2.12</ecNumber>
    </recommendedName>
    <alternativeName>
        <fullName>Capsular-polysaccharide-transporting ATPase</fullName>
    </alternativeName>
</protein>
<reference key="1">
    <citation type="journal article" date="1991" name="Mol. Microbiol.">
        <title>Evidence for a common molecular origin of the capsule gene loci in Gram-negative bacteria expressing group II capsular polysaccharides.</title>
        <authorList>
            <person name="Frosch M."/>
            <person name="Edwards U."/>
            <person name="Bousset K."/>
            <person name="Krausse B."/>
            <person name="Weisgerber C."/>
        </authorList>
    </citation>
    <scope>NUCLEOTIDE SEQUENCE [GENOMIC DNA]</scope>
    <source>
        <strain>B1940 / Serogroup B</strain>
    </source>
</reference>
<reference key="2">
    <citation type="journal article" date="2000" name="Science">
        <title>Complete genome sequence of Neisseria meningitidis serogroup B strain MC58.</title>
        <authorList>
            <person name="Tettelin H."/>
            <person name="Saunders N.J."/>
            <person name="Heidelberg J.F."/>
            <person name="Jeffries A.C."/>
            <person name="Nelson K.E."/>
            <person name="Eisen J.A."/>
            <person name="Ketchum K.A."/>
            <person name="Hood D.W."/>
            <person name="Peden J.F."/>
            <person name="Dodson R.J."/>
            <person name="Nelson W.C."/>
            <person name="Gwinn M.L."/>
            <person name="DeBoy R.T."/>
            <person name="Peterson J.D."/>
            <person name="Hickey E.K."/>
            <person name="Haft D.H."/>
            <person name="Salzberg S.L."/>
            <person name="White O."/>
            <person name="Fleischmann R.D."/>
            <person name="Dougherty B.A."/>
            <person name="Mason T.M."/>
            <person name="Ciecko A."/>
            <person name="Parksey D.S."/>
            <person name="Blair E."/>
            <person name="Cittone H."/>
            <person name="Clark E.B."/>
            <person name="Cotton M.D."/>
            <person name="Utterback T.R."/>
            <person name="Khouri H.M."/>
            <person name="Qin H."/>
            <person name="Vamathevan J.J."/>
            <person name="Gill J."/>
            <person name="Scarlato V."/>
            <person name="Masignani V."/>
            <person name="Pizza M."/>
            <person name="Grandi G."/>
            <person name="Sun L."/>
            <person name="Smith H.O."/>
            <person name="Fraser C.M."/>
            <person name="Moxon E.R."/>
            <person name="Rappuoli R."/>
            <person name="Venter J.C."/>
        </authorList>
    </citation>
    <scope>NUCLEOTIDE SEQUENCE [LARGE SCALE GENOMIC DNA]</scope>
    <source>
        <strain>ATCC BAA-335 / MC58</strain>
    </source>
</reference>
<name>CTRD_NEIMB</name>
<feature type="chain" id="PRO_0000092237" description="Capsule polysaccharide export ATP-binding protein CtrD">
    <location>
        <begin position="1"/>
        <end position="216"/>
    </location>
</feature>
<feature type="domain" description="ABC transporter" evidence="1">
    <location>
        <begin position="2"/>
        <end position="215"/>
    </location>
</feature>
<feature type="binding site" evidence="1">
    <location>
        <begin position="38"/>
        <end position="45"/>
    </location>
    <ligand>
        <name>ATP</name>
        <dbReference type="ChEBI" id="CHEBI:30616"/>
    </ligand>
</feature>
<feature type="sequence conflict" description="In Ref. 1; AAA25453." evidence="2" ref="1">
    <original>RYLTRQGW</original>
    <variation>QYQMRGGM</variation>
    <location>
        <begin position="10"/>
        <end position="17"/>
    </location>
</feature>
<feature type="sequence conflict" description="In Ref. 1; AAA25453." evidence="2" ref="1">
    <original>H</original>
    <variation>D</variation>
    <location>
        <position position="22"/>
    </location>
</feature>
<feature type="sequence conflict" description="In Ref. 1; AAA25453." evidence="2" ref="1">
    <original>SFKME</original>
    <variation>NFSLQ</variation>
    <location>
        <begin position="25"/>
        <end position="29"/>
    </location>
</feature>
<feature type="sequence conflict" description="In Ref. 1; AAA25453." evidence="2" ref="1">
    <original>I</original>
    <variation>V</variation>
    <location>
        <position position="34"/>
    </location>
</feature>
<feature type="sequence conflict" description="In Ref. 1; AAA25453." evidence="2" ref="1">
    <original>I</original>
    <variation>V</variation>
    <location>
        <position position="48"/>
    </location>
</feature>
<feature type="sequence conflict" description="In Ref. 1; AAA25453." evidence="2" ref="1">
    <original>T</original>
    <variation>S</variation>
    <location>
        <position position="59"/>
    </location>
</feature>
<sequence>MISVEHVSKRYLTRQGWRTVLHDISFKMEKGEKIGILGRNGAGKSTLIRLISGVEPPTTGEIKRTMSISWPLAFSGAFQGSLTGMDNLRFICRIYNVDIDYVKAFTEEFSELGQYLYEPVKRYSSGMKARLAFALSLAVEFDCYLIDEVIAVGDSRFADKCKYELFEKRKDRSIILVSHSHSAMKQYCDNAMVLEKGHMYQFEDMDKAYEYYNSLP</sequence>